<organism>
    <name type="scientific">Xanthobacter autotrophicus (strain ATCC BAA-1158 / Py2)</name>
    <dbReference type="NCBI Taxonomy" id="78245"/>
    <lineage>
        <taxon>Bacteria</taxon>
        <taxon>Pseudomonadati</taxon>
        <taxon>Pseudomonadota</taxon>
        <taxon>Alphaproteobacteria</taxon>
        <taxon>Hyphomicrobiales</taxon>
        <taxon>Xanthobacteraceae</taxon>
        <taxon>Xanthobacter</taxon>
    </lineage>
</organism>
<accession>A7IK14</accession>
<evidence type="ECO:0000255" key="1">
    <source>
        <dbReference type="HAMAP-Rule" id="MF_00347"/>
    </source>
</evidence>
<evidence type="ECO:0000256" key="2">
    <source>
        <dbReference type="SAM" id="MobiDB-lite"/>
    </source>
</evidence>
<reference key="1">
    <citation type="submission" date="2007-07" db="EMBL/GenBank/DDBJ databases">
        <title>Complete sequence of chromosome of Xanthobacter autotrophicus Py2.</title>
        <authorList>
            <consortium name="US DOE Joint Genome Institute"/>
            <person name="Copeland A."/>
            <person name="Lucas S."/>
            <person name="Lapidus A."/>
            <person name="Barry K."/>
            <person name="Glavina del Rio T."/>
            <person name="Hammon N."/>
            <person name="Israni S."/>
            <person name="Dalin E."/>
            <person name="Tice H."/>
            <person name="Pitluck S."/>
            <person name="Sims D."/>
            <person name="Brettin T."/>
            <person name="Bruce D."/>
            <person name="Detter J.C."/>
            <person name="Han C."/>
            <person name="Tapia R."/>
            <person name="Brainard J."/>
            <person name="Schmutz J."/>
            <person name="Larimer F."/>
            <person name="Land M."/>
            <person name="Hauser L."/>
            <person name="Kyrpides N."/>
            <person name="Kim E."/>
            <person name="Ensigns S.A."/>
            <person name="Richardson P."/>
        </authorList>
    </citation>
    <scope>NUCLEOTIDE SEQUENCE [LARGE SCALE GENOMIC DNA]</scope>
    <source>
        <strain>ATCC BAA-1158 / Py2</strain>
    </source>
</reference>
<sequence length="726" mass="80543">MNEAAALAEVEIPAGAAEVLALAQSPQRFINREISWLHFNRRVLEEAENRNHPLLEQLRFLSISANNLDEFFMVRVAGLKEQVREGVQTPSPDGLTPSEQLATILASAAQLISDQQGRWLELRHDLAGVGIVLVDGVEVTAEDLVVLDRHFLNHVFPVLTPLAIDPAHPFPFIPNLGFSLALQLVRQADGRGMNALIRIPAKVERFIRLPDLGTGALRFITLEQMIGLFISRLFPGYAVKGQGVFRVVRDSDLEIEEEAEDLVRLFETALKQRRYGEVIRMEADAAMPAELRNFVARELGVNDDEIFVVGGVLALNEFSQLVSVDRPDLKFQAYNARFPERIRDHGGDCFLAIREKDILVHHPYESFDVVVQFLRQAARDPNVVAIKQTLYRTSSDSPIVKALAEAAEAGKSVTALVELKARFDEEANIRWARDLERAGVQVVFGFIELKTHGKLSMAVRREGAQLATYVHVGTGNYHPITARIYTDLSFFTADPVIAQDVARIFNFITGYATPGELDAMAVSPTGLKPRLLNHIADEIEFAKAGRPAAIWLKCNSLVDPEIIDALYEASAAGVQVDCIIRGICCLRPGIPGLSENIRVKSIVGRFLEHSRVYCFGAGHGLPSPNAVVYISSADLMPRNLDRRVETLCPITNPTVHEQVLDQIMVANLIDNQQSWRVLPDGSSERIVPAPGEEPFNAHQYFMTNPSLSGRGKSLKDSSPRSLFVRR</sequence>
<gene>
    <name evidence="1" type="primary">ppk</name>
    <name type="ordered locus">Xaut_3127</name>
</gene>
<comment type="function">
    <text evidence="1">Catalyzes the reversible transfer of the terminal phosphate of ATP to form a long-chain polyphosphate (polyP).</text>
</comment>
<comment type="catalytic activity">
    <reaction evidence="1">
        <text>[phosphate](n) + ATP = [phosphate](n+1) + ADP</text>
        <dbReference type="Rhea" id="RHEA:19573"/>
        <dbReference type="Rhea" id="RHEA-COMP:9859"/>
        <dbReference type="Rhea" id="RHEA-COMP:14280"/>
        <dbReference type="ChEBI" id="CHEBI:16838"/>
        <dbReference type="ChEBI" id="CHEBI:30616"/>
        <dbReference type="ChEBI" id="CHEBI:456216"/>
        <dbReference type="EC" id="2.7.4.1"/>
    </reaction>
</comment>
<comment type="cofactor">
    <cofactor evidence="1">
        <name>Mg(2+)</name>
        <dbReference type="ChEBI" id="CHEBI:18420"/>
    </cofactor>
</comment>
<comment type="PTM">
    <text evidence="1">An intermediate of this reaction is the autophosphorylated ppk in which a phosphate is covalently linked to a histidine residue through a N-P bond.</text>
</comment>
<comment type="similarity">
    <text evidence="1">Belongs to the polyphosphate kinase 1 (PPK1) family.</text>
</comment>
<feature type="chain" id="PRO_1000120508" description="Polyphosphate kinase">
    <location>
        <begin position="1"/>
        <end position="726"/>
    </location>
</feature>
<feature type="region of interest" description="Disordered" evidence="2">
    <location>
        <begin position="704"/>
        <end position="726"/>
    </location>
</feature>
<feature type="active site" description="Phosphohistidine intermediate" evidence="1">
    <location>
        <position position="452"/>
    </location>
</feature>
<feature type="binding site" evidence="1">
    <location>
        <position position="67"/>
    </location>
    <ligand>
        <name>ATP</name>
        <dbReference type="ChEBI" id="CHEBI:30616"/>
    </ligand>
</feature>
<feature type="binding site" evidence="1">
    <location>
        <position position="392"/>
    </location>
    <ligand>
        <name>Mg(2+)</name>
        <dbReference type="ChEBI" id="CHEBI:18420"/>
    </ligand>
</feature>
<feature type="binding site" evidence="1">
    <location>
        <position position="422"/>
    </location>
    <ligand>
        <name>Mg(2+)</name>
        <dbReference type="ChEBI" id="CHEBI:18420"/>
    </ligand>
</feature>
<feature type="binding site" evidence="1">
    <location>
        <position position="485"/>
    </location>
    <ligand>
        <name>ATP</name>
        <dbReference type="ChEBI" id="CHEBI:30616"/>
    </ligand>
</feature>
<feature type="binding site" evidence="1">
    <location>
        <position position="581"/>
    </location>
    <ligand>
        <name>ATP</name>
        <dbReference type="ChEBI" id="CHEBI:30616"/>
    </ligand>
</feature>
<feature type="binding site" evidence="1">
    <location>
        <position position="609"/>
    </location>
    <ligand>
        <name>ATP</name>
        <dbReference type="ChEBI" id="CHEBI:30616"/>
    </ligand>
</feature>
<protein>
    <recommendedName>
        <fullName evidence="1">Polyphosphate kinase</fullName>
        <ecNumber evidence="1">2.7.4.1</ecNumber>
    </recommendedName>
    <alternativeName>
        <fullName evidence="1">ATP-polyphosphate phosphotransferase</fullName>
    </alternativeName>
    <alternativeName>
        <fullName evidence="1">Polyphosphoric acid kinase</fullName>
    </alternativeName>
</protein>
<dbReference type="EC" id="2.7.4.1" evidence="1"/>
<dbReference type="EMBL" id="CP000781">
    <property type="protein sequence ID" value="ABS68357.1"/>
    <property type="molecule type" value="Genomic_DNA"/>
</dbReference>
<dbReference type="SMR" id="A7IK14"/>
<dbReference type="STRING" id="78245.Xaut_3127"/>
<dbReference type="KEGG" id="xau:Xaut_3127"/>
<dbReference type="eggNOG" id="COG0855">
    <property type="taxonomic scope" value="Bacteria"/>
</dbReference>
<dbReference type="HOGENOM" id="CLU_009678_5_0_5"/>
<dbReference type="OrthoDB" id="9761456at2"/>
<dbReference type="PhylomeDB" id="A7IK14"/>
<dbReference type="Proteomes" id="UP000002417">
    <property type="component" value="Chromosome"/>
</dbReference>
<dbReference type="GO" id="GO:0009358">
    <property type="term" value="C:polyphosphate kinase complex"/>
    <property type="evidence" value="ECO:0007669"/>
    <property type="project" value="InterPro"/>
</dbReference>
<dbReference type="GO" id="GO:0005524">
    <property type="term" value="F:ATP binding"/>
    <property type="evidence" value="ECO:0007669"/>
    <property type="project" value="UniProtKB-KW"/>
</dbReference>
<dbReference type="GO" id="GO:0046872">
    <property type="term" value="F:metal ion binding"/>
    <property type="evidence" value="ECO:0007669"/>
    <property type="project" value="UniProtKB-KW"/>
</dbReference>
<dbReference type="GO" id="GO:0008976">
    <property type="term" value="F:polyphosphate kinase activity"/>
    <property type="evidence" value="ECO:0007669"/>
    <property type="project" value="UniProtKB-UniRule"/>
</dbReference>
<dbReference type="GO" id="GO:0006799">
    <property type="term" value="P:polyphosphate biosynthetic process"/>
    <property type="evidence" value="ECO:0007669"/>
    <property type="project" value="UniProtKB-UniRule"/>
</dbReference>
<dbReference type="CDD" id="cd09165">
    <property type="entry name" value="PLDc_PaPPK1_C1_like"/>
    <property type="match status" value="1"/>
</dbReference>
<dbReference type="CDD" id="cd09168">
    <property type="entry name" value="PLDc_PaPPK1_C2_like"/>
    <property type="match status" value="1"/>
</dbReference>
<dbReference type="FunFam" id="3.30.870.10:FF:000001">
    <property type="entry name" value="Polyphosphate kinase"/>
    <property type="match status" value="1"/>
</dbReference>
<dbReference type="Gene3D" id="3.30.870.10">
    <property type="entry name" value="Endonuclease Chain A"/>
    <property type="match status" value="2"/>
</dbReference>
<dbReference type="Gene3D" id="3.30.1840.10">
    <property type="entry name" value="Polyphosphate kinase middle domain"/>
    <property type="match status" value="1"/>
</dbReference>
<dbReference type="Gene3D" id="1.20.58.310">
    <property type="entry name" value="Polyphosphate kinase N-terminal domain"/>
    <property type="match status" value="1"/>
</dbReference>
<dbReference type="HAMAP" id="MF_00347">
    <property type="entry name" value="Polyphosphate_kinase"/>
    <property type="match status" value="1"/>
</dbReference>
<dbReference type="InterPro" id="IPR003414">
    <property type="entry name" value="PP_kinase"/>
</dbReference>
<dbReference type="InterPro" id="IPR041108">
    <property type="entry name" value="PP_kinase_C_1"/>
</dbReference>
<dbReference type="InterPro" id="IPR024953">
    <property type="entry name" value="PP_kinase_middle"/>
</dbReference>
<dbReference type="InterPro" id="IPR036830">
    <property type="entry name" value="PP_kinase_middle_dom_sf"/>
</dbReference>
<dbReference type="InterPro" id="IPR025200">
    <property type="entry name" value="PPK_C_dom2"/>
</dbReference>
<dbReference type="InterPro" id="IPR025198">
    <property type="entry name" value="PPK_N_dom"/>
</dbReference>
<dbReference type="InterPro" id="IPR036832">
    <property type="entry name" value="PPK_N_dom_sf"/>
</dbReference>
<dbReference type="NCBIfam" id="TIGR03705">
    <property type="entry name" value="poly_P_kin"/>
    <property type="match status" value="1"/>
</dbReference>
<dbReference type="NCBIfam" id="NF003917">
    <property type="entry name" value="PRK05443.1-1"/>
    <property type="match status" value="1"/>
</dbReference>
<dbReference type="NCBIfam" id="NF003918">
    <property type="entry name" value="PRK05443.1-2"/>
    <property type="match status" value="1"/>
</dbReference>
<dbReference type="NCBIfam" id="NF003919">
    <property type="entry name" value="PRK05443.1-4"/>
    <property type="match status" value="1"/>
</dbReference>
<dbReference type="NCBIfam" id="NF003921">
    <property type="entry name" value="PRK05443.2-2"/>
    <property type="match status" value="1"/>
</dbReference>
<dbReference type="PANTHER" id="PTHR30218">
    <property type="entry name" value="POLYPHOSPHATE KINASE"/>
    <property type="match status" value="1"/>
</dbReference>
<dbReference type="PANTHER" id="PTHR30218:SF0">
    <property type="entry name" value="POLYPHOSPHATE KINASE"/>
    <property type="match status" value="1"/>
</dbReference>
<dbReference type="Pfam" id="PF02503">
    <property type="entry name" value="PP_kinase"/>
    <property type="match status" value="1"/>
</dbReference>
<dbReference type="Pfam" id="PF13090">
    <property type="entry name" value="PP_kinase_C"/>
    <property type="match status" value="1"/>
</dbReference>
<dbReference type="Pfam" id="PF17941">
    <property type="entry name" value="PP_kinase_C_1"/>
    <property type="match status" value="1"/>
</dbReference>
<dbReference type="Pfam" id="PF13089">
    <property type="entry name" value="PP_kinase_N"/>
    <property type="match status" value="1"/>
</dbReference>
<dbReference type="PIRSF" id="PIRSF015589">
    <property type="entry name" value="PP_kinase"/>
    <property type="match status" value="1"/>
</dbReference>
<dbReference type="SUPFAM" id="SSF56024">
    <property type="entry name" value="Phospholipase D/nuclease"/>
    <property type="match status" value="2"/>
</dbReference>
<dbReference type="SUPFAM" id="SSF143724">
    <property type="entry name" value="PHP14-like"/>
    <property type="match status" value="1"/>
</dbReference>
<dbReference type="SUPFAM" id="SSF140356">
    <property type="entry name" value="PPK N-terminal domain-like"/>
    <property type="match status" value="1"/>
</dbReference>
<keyword id="KW-0067">ATP-binding</keyword>
<keyword id="KW-0418">Kinase</keyword>
<keyword id="KW-0460">Magnesium</keyword>
<keyword id="KW-0479">Metal-binding</keyword>
<keyword id="KW-0547">Nucleotide-binding</keyword>
<keyword id="KW-0597">Phosphoprotein</keyword>
<keyword id="KW-1185">Reference proteome</keyword>
<keyword id="KW-0808">Transferase</keyword>
<name>PPK1_XANP2</name>
<proteinExistence type="inferred from homology"/>